<name>LIVM_ECOLI</name>
<organism>
    <name type="scientific">Escherichia coli (strain K12)</name>
    <dbReference type="NCBI Taxonomy" id="83333"/>
    <lineage>
        <taxon>Bacteria</taxon>
        <taxon>Pseudomonadati</taxon>
        <taxon>Pseudomonadota</taxon>
        <taxon>Gammaproteobacteria</taxon>
        <taxon>Enterobacterales</taxon>
        <taxon>Enterobacteriaceae</taxon>
        <taxon>Escherichia</taxon>
    </lineage>
</organism>
<reference key="1">
    <citation type="journal article" date="1990" name="J. Biol. Chem.">
        <title>Nucleotide sequence and genetic characterization reveal six essential genes for the LIV-I and LS transport systems of Escherichia coli.</title>
        <authorList>
            <person name="Adams M.D."/>
            <person name="Wagner L.M."/>
            <person name="Graddis T.J."/>
            <person name="Landick R."/>
            <person name="Antonucci T.K."/>
            <person name="Gibson A.L."/>
            <person name="Oxender D.L."/>
        </authorList>
    </citation>
    <scope>NUCLEOTIDE SEQUENCE [GENOMIC DNA]</scope>
</reference>
<reference key="2">
    <citation type="journal article" date="1994" name="Nucleic Acids Res.">
        <title>Analysis of the Escherichia coli genome. V. DNA sequence of the region from 76.0 to 81.5 minutes.</title>
        <authorList>
            <person name="Sofia H.J."/>
            <person name="Burland V."/>
            <person name="Daniels D.L."/>
            <person name="Plunkett G. III"/>
            <person name="Blattner F.R."/>
        </authorList>
    </citation>
    <scope>NUCLEOTIDE SEQUENCE [LARGE SCALE GENOMIC DNA]</scope>
    <source>
        <strain>K12 / MG1655 / ATCC 47076</strain>
    </source>
</reference>
<reference key="3">
    <citation type="journal article" date="1997" name="Science">
        <title>The complete genome sequence of Escherichia coli K-12.</title>
        <authorList>
            <person name="Blattner F.R."/>
            <person name="Plunkett G. III"/>
            <person name="Bloch C.A."/>
            <person name="Perna N.T."/>
            <person name="Burland V."/>
            <person name="Riley M."/>
            <person name="Collado-Vides J."/>
            <person name="Glasner J.D."/>
            <person name="Rode C.K."/>
            <person name="Mayhew G.F."/>
            <person name="Gregor J."/>
            <person name="Davis N.W."/>
            <person name="Kirkpatrick H.A."/>
            <person name="Goeden M.A."/>
            <person name="Rose D.J."/>
            <person name="Mau B."/>
            <person name="Shao Y."/>
        </authorList>
    </citation>
    <scope>NUCLEOTIDE SEQUENCE [LARGE SCALE GENOMIC DNA]</scope>
    <source>
        <strain>K12 / MG1655 / ATCC 47076</strain>
    </source>
</reference>
<reference key="4">
    <citation type="journal article" date="2006" name="Mol. Syst. Biol.">
        <title>Highly accurate genome sequences of Escherichia coli K-12 strains MG1655 and W3110.</title>
        <authorList>
            <person name="Hayashi K."/>
            <person name="Morooka N."/>
            <person name="Yamamoto Y."/>
            <person name="Fujita K."/>
            <person name="Isono K."/>
            <person name="Choi S."/>
            <person name="Ohtsubo E."/>
            <person name="Baba T."/>
            <person name="Wanner B.L."/>
            <person name="Mori H."/>
            <person name="Horiuchi T."/>
        </authorList>
    </citation>
    <scope>NUCLEOTIDE SEQUENCE [LARGE SCALE GENOMIC DNA]</scope>
    <source>
        <strain>K12 / W3110 / ATCC 27325 / DSM 5911</strain>
    </source>
</reference>
<reference key="5">
    <citation type="journal article" date="2005" name="Science">
        <title>Global topology analysis of the Escherichia coli inner membrane proteome.</title>
        <authorList>
            <person name="Daley D.O."/>
            <person name="Rapp M."/>
            <person name="Granseth E."/>
            <person name="Melen K."/>
            <person name="Drew D."/>
            <person name="von Heijne G."/>
        </authorList>
    </citation>
    <scope>SUBCELLULAR LOCATION</scope>
    <source>
        <strain>K12 / MG1655 / ATCC 47076</strain>
    </source>
</reference>
<sequence>MKPMHIAMALLSAAMFFVLAGVFMGVQLELDGTKLVVDTASDVRWQWVFIGTAVVFFFQLLRPAFQKGLKSVSGPKFILPAIDGSTVKQKLFLVALLVLAVAWPFMVSRGTVDIATLTMIYIILGLGLNVVVGLSGLLVLGYGGFYAIGAYTFALLNHYYGLGFWTCLPIAGLMAAAAGFLLGFPVLRLRGDYLAIVTLGFGEIVRILLLNNTEITGGPNGISQIPKPTLFGLEFSRTAREGGWDTFSNFFGLKYDPSDRVIFLYLVALLLVVLSLFVINRLLRMPLGRAWEALREDEIACRSLGLSPRRIKLTAFTISAAFAGFAGTLFAARQGFVSPESFTFAESAFVLAIVVLGGMGSQFAVILAAILLVVSRELMRDFNEYSMLMLGGLMVLMMIWRPQGLLPMTRPQLKLKNGAAKGEQA</sequence>
<proteinExistence type="inferred from homology"/>
<comment type="function">
    <text>Part of the binding-protein-dependent transport system for branched-chain amino acids. Probably responsible for the translocation of the substrates across the membrane.</text>
</comment>
<comment type="subcellular location">
    <subcellularLocation>
        <location evidence="2">Cell inner membrane</location>
        <topology evidence="2">Multi-pass membrane protein</topology>
    </subcellularLocation>
</comment>
<comment type="similarity">
    <text evidence="3">Belongs to the binding-protein-dependent transport system permease family. LivHM subfamily.</text>
</comment>
<dbReference type="EMBL" id="J05516">
    <property type="protein sequence ID" value="AAA83885.1"/>
    <property type="molecule type" value="Genomic_DNA"/>
</dbReference>
<dbReference type="EMBL" id="U00039">
    <property type="protein sequence ID" value="AAB18431.1"/>
    <property type="molecule type" value="Genomic_DNA"/>
</dbReference>
<dbReference type="EMBL" id="U00096">
    <property type="protein sequence ID" value="AAC76481.1"/>
    <property type="molecule type" value="Genomic_DNA"/>
</dbReference>
<dbReference type="EMBL" id="AP009048">
    <property type="protein sequence ID" value="BAE77837.1"/>
    <property type="molecule type" value="Genomic_DNA"/>
</dbReference>
<dbReference type="PIR" id="S47675">
    <property type="entry name" value="S47675"/>
</dbReference>
<dbReference type="RefSeq" id="NP_417913.1">
    <property type="nucleotide sequence ID" value="NC_000913.3"/>
</dbReference>
<dbReference type="RefSeq" id="WP_000803813.1">
    <property type="nucleotide sequence ID" value="NZ_LN832404.1"/>
</dbReference>
<dbReference type="BioGRID" id="4262489">
    <property type="interactions" value="17"/>
</dbReference>
<dbReference type="ComplexPortal" id="CPX-4316">
    <property type="entry name" value="Branched chain amino acid ABC transporter complex"/>
</dbReference>
<dbReference type="ComplexPortal" id="CPX-4317">
    <property type="entry name" value="Branched chain amino acid, leucine-specific ABC transporter complex"/>
</dbReference>
<dbReference type="FunCoup" id="P22729">
    <property type="interactions" value="479"/>
</dbReference>
<dbReference type="STRING" id="511145.b3456"/>
<dbReference type="TCDB" id="3.A.1.4.1">
    <property type="family name" value="the atp-binding cassette (abc) superfamily"/>
</dbReference>
<dbReference type="PaxDb" id="511145-b3456"/>
<dbReference type="EnsemblBacteria" id="AAC76481">
    <property type="protein sequence ID" value="AAC76481"/>
    <property type="gene ID" value="b3456"/>
</dbReference>
<dbReference type="GeneID" id="947966"/>
<dbReference type="KEGG" id="ecj:JW3421"/>
<dbReference type="KEGG" id="eco:b3456"/>
<dbReference type="KEGG" id="ecoc:C3026_18720"/>
<dbReference type="PATRIC" id="fig|1411691.4.peg.3270"/>
<dbReference type="EchoBASE" id="EB0536"/>
<dbReference type="eggNOG" id="COG4177">
    <property type="taxonomic scope" value="Bacteria"/>
</dbReference>
<dbReference type="HOGENOM" id="CLU_031365_1_1_6"/>
<dbReference type="InParanoid" id="P22729"/>
<dbReference type="OMA" id="VFWYKLQ"/>
<dbReference type="OrthoDB" id="9814461at2"/>
<dbReference type="PhylomeDB" id="P22729"/>
<dbReference type="BioCyc" id="EcoCyc:LIVM-MONOMER"/>
<dbReference type="BioCyc" id="MetaCyc:LIVM-MONOMER"/>
<dbReference type="PRO" id="PR:P22729"/>
<dbReference type="Proteomes" id="UP000000625">
    <property type="component" value="Chromosome"/>
</dbReference>
<dbReference type="GO" id="GO:0055052">
    <property type="term" value="C:ATP-binding cassette (ABC) transporter complex, substrate-binding subunit-containing"/>
    <property type="evidence" value="ECO:0000303"/>
    <property type="project" value="ComplexPortal"/>
</dbReference>
<dbReference type="GO" id="GO:0016020">
    <property type="term" value="C:membrane"/>
    <property type="evidence" value="ECO:0000303"/>
    <property type="project" value="ComplexPortal"/>
</dbReference>
<dbReference type="GO" id="GO:0005886">
    <property type="term" value="C:plasma membrane"/>
    <property type="evidence" value="ECO:0000314"/>
    <property type="project" value="EcoCyc"/>
</dbReference>
<dbReference type="GO" id="GO:0015658">
    <property type="term" value="F:branched-chain amino acid transmembrane transporter activity"/>
    <property type="evidence" value="ECO:0000314"/>
    <property type="project" value="EcoCyc"/>
</dbReference>
<dbReference type="GO" id="GO:0015188">
    <property type="term" value="F:L-isoleucine transmembrane transporter activity"/>
    <property type="evidence" value="ECO:0000314"/>
    <property type="project" value="EcoCyc"/>
</dbReference>
<dbReference type="GO" id="GO:0015190">
    <property type="term" value="F:L-leucine transmembrane transporter activity"/>
    <property type="evidence" value="ECO:0000269"/>
    <property type="project" value="EcoCyc"/>
</dbReference>
<dbReference type="GO" id="GO:0015192">
    <property type="term" value="F:L-phenylalanine transmembrane transporter activity"/>
    <property type="evidence" value="ECO:0000314"/>
    <property type="project" value="EcoCyc"/>
</dbReference>
<dbReference type="GO" id="GO:0005304">
    <property type="term" value="F:L-valine transmembrane transporter activity"/>
    <property type="evidence" value="ECO:0000314"/>
    <property type="project" value="EcoCyc"/>
</dbReference>
<dbReference type="GO" id="GO:0015803">
    <property type="term" value="P:branched-chain amino acid transport"/>
    <property type="evidence" value="ECO:0000314"/>
    <property type="project" value="EcoCyc"/>
</dbReference>
<dbReference type="GO" id="GO:1903714">
    <property type="term" value="P:isoleucine transmembrane transport"/>
    <property type="evidence" value="ECO:0000314"/>
    <property type="project" value="EcoCyc"/>
</dbReference>
<dbReference type="GO" id="GO:1903785">
    <property type="term" value="P:L-valine transmembrane transport"/>
    <property type="evidence" value="ECO:0000314"/>
    <property type="project" value="EcoCyc"/>
</dbReference>
<dbReference type="GO" id="GO:0015823">
    <property type="term" value="P:phenylalanine transport"/>
    <property type="evidence" value="ECO:0000314"/>
    <property type="project" value="EcoCyc"/>
</dbReference>
<dbReference type="CDD" id="cd06581">
    <property type="entry name" value="TM_PBP1_LivM_like"/>
    <property type="match status" value="1"/>
</dbReference>
<dbReference type="InterPro" id="IPR001851">
    <property type="entry name" value="ABC_transp_permease"/>
</dbReference>
<dbReference type="InterPro" id="IPR021807">
    <property type="entry name" value="LivHM_N"/>
</dbReference>
<dbReference type="InterPro" id="IPR043428">
    <property type="entry name" value="LivM-like"/>
</dbReference>
<dbReference type="NCBIfam" id="NF008450">
    <property type="entry name" value="PRK11301.1"/>
    <property type="match status" value="1"/>
</dbReference>
<dbReference type="PANTHER" id="PTHR30482">
    <property type="entry name" value="HIGH-AFFINITY BRANCHED-CHAIN AMINO ACID TRANSPORT SYSTEM PERMEASE"/>
    <property type="match status" value="1"/>
</dbReference>
<dbReference type="PANTHER" id="PTHR30482:SF20">
    <property type="entry name" value="HIGH-AFFINITY BRANCHED-CHAIN AMINO ACID TRANSPORT SYSTEM PERMEASE PROTEIN LIVM"/>
    <property type="match status" value="1"/>
</dbReference>
<dbReference type="Pfam" id="PF02653">
    <property type="entry name" value="BPD_transp_2"/>
    <property type="match status" value="1"/>
</dbReference>
<dbReference type="Pfam" id="PF11862">
    <property type="entry name" value="DUF3382"/>
    <property type="match status" value="1"/>
</dbReference>
<feature type="chain" id="PRO_0000060062" description="High-affinity branched-chain amino acid transport system permease protein LivM">
    <location>
        <begin position="1"/>
        <end position="425"/>
    </location>
</feature>
<feature type="transmembrane region" description="Helical" evidence="1">
    <location>
        <begin position="6"/>
        <end position="26"/>
    </location>
</feature>
<feature type="transmembrane region" description="Helical" evidence="1">
    <location>
        <begin position="45"/>
        <end position="65"/>
    </location>
</feature>
<feature type="transmembrane region" description="Helical" evidence="1">
    <location>
        <begin position="92"/>
        <end position="112"/>
    </location>
</feature>
<feature type="transmembrane region" description="Helical" evidence="1">
    <location>
        <begin position="120"/>
        <end position="140"/>
    </location>
</feature>
<feature type="transmembrane region" description="Helical" evidence="1">
    <location>
        <begin position="145"/>
        <end position="165"/>
    </location>
</feature>
<feature type="transmembrane region" description="Helical" evidence="1">
    <location>
        <begin position="167"/>
        <end position="187"/>
    </location>
</feature>
<feature type="transmembrane region" description="Helical" evidence="1">
    <location>
        <begin position="191"/>
        <end position="211"/>
    </location>
</feature>
<feature type="transmembrane region" description="Helical" evidence="1">
    <location>
        <begin position="260"/>
        <end position="280"/>
    </location>
</feature>
<feature type="transmembrane region" description="Helical" evidence="1">
    <location>
        <begin position="311"/>
        <end position="331"/>
    </location>
</feature>
<feature type="transmembrane region" description="Helical" evidence="1">
    <location>
        <begin position="353"/>
        <end position="373"/>
    </location>
</feature>
<feature type="transmembrane region" description="Helical" evidence="1">
    <location>
        <begin position="387"/>
        <end position="407"/>
    </location>
</feature>
<feature type="sequence conflict" description="In Ref. 1; AAA83885." evidence="3" ref="1">
    <original>AYTFALLNHYYGLGFWTCLPIAGLMAAAA</original>
    <variation>LHFCAAQSLLRLGLLDLPADCWINGSGG</variation>
    <location>
        <begin position="150"/>
        <end position="178"/>
    </location>
</feature>
<feature type="sequence conflict" description="In Ref. 1; AAA83885." evidence="3" ref="1">
    <original>R</original>
    <variation>G</variation>
    <location>
        <position position="295"/>
    </location>
</feature>
<feature type="sequence conflict" description="In Ref. 1; AAA83885." evidence="3" ref="1">
    <original>P</original>
    <variation>R</variation>
    <location>
        <position position="411"/>
    </location>
</feature>
<protein>
    <recommendedName>
        <fullName>High-affinity branched-chain amino acid transport system permease protein LivM</fullName>
    </recommendedName>
    <alternativeName>
        <fullName>LIV-I protein M</fullName>
    </alternativeName>
</protein>
<accession>P22729</accession>
<accession>Q2M7B9</accession>
<gene>
    <name type="primary">livM</name>
    <name type="ordered locus">b3456</name>
    <name type="ordered locus">JW3421</name>
</gene>
<keyword id="KW-0029">Amino-acid transport</keyword>
<keyword id="KW-0997">Cell inner membrane</keyword>
<keyword id="KW-1003">Cell membrane</keyword>
<keyword id="KW-0472">Membrane</keyword>
<keyword id="KW-1185">Reference proteome</keyword>
<keyword id="KW-0812">Transmembrane</keyword>
<keyword id="KW-1133">Transmembrane helix</keyword>
<keyword id="KW-0813">Transport</keyword>
<evidence type="ECO:0000255" key="1"/>
<evidence type="ECO:0000269" key="2">
    <source>
    </source>
</evidence>
<evidence type="ECO:0000305" key="3"/>